<reference key="1">
    <citation type="journal article" date="2007" name="Mol. Biol. Evol.">
        <title>Chloroplast genome (cpDNA) of Cycas taitungensis and 56 cp protein-coding genes of Gnetum parvifolium: insights into cpDNA evolution and phylogeny of extant seed plants.</title>
        <authorList>
            <person name="Wu C.-S."/>
            <person name="Wang Y.-N."/>
            <person name="Liu S.-M."/>
            <person name="Chaw S.-M."/>
        </authorList>
    </citation>
    <scope>NUCLEOTIDE SEQUENCE [LARGE SCALE GENOMIC DNA]</scope>
</reference>
<proteinExistence type="inferred from homology"/>
<gene>
    <name evidence="1" type="primary">psaJ</name>
</gene>
<geneLocation type="chloroplast"/>
<comment type="function">
    <text evidence="1">May help in the organization of the PsaE and PsaF subunits.</text>
</comment>
<comment type="subcellular location">
    <subcellularLocation>
        <location evidence="1">Plastid</location>
        <location evidence="1">Chloroplast thylakoid membrane</location>
        <topology evidence="1">Single-pass membrane protein</topology>
    </subcellularLocation>
</comment>
<comment type="similarity">
    <text evidence="1">Belongs to the PsaJ family.</text>
</comment>
<protein>
    <recommendedName>
        <fullName evidence="1">Photosystem I reaction center subunit IX</fullName>
    </recommendedName>
    <alternativeName>
        <fullName evidence="1">PSI-J</fullName>
    </alternativeName>
</protein>
<evidence type="ECO:0000255" key="1">
    <source>
        <dbReference type="HAMAP-Rule" id="MF_00522"/>
    </source>
</evidence>
<keyword id="KW-0150">Chloroplast</keyword>
<keyword id="KW-0472">Membrane</keyword>
<keyword id="KW-0602">Photosynthesis</keyword>
<keyword id="KW-0603">Photosystem I</keyword>
<keyword id="KW-0934">Plastid</keyword>
<keyword id="KW-0793">Thylakoid</keyword>
<keyword id="KW-0812">Transmembrane</keyword>
<keyword id="KW-1133">Transmembrane helix</keyword>
<sequence>MRDIKTYLSTAPVLATLWFGSLAGLLIEINRFFPDALTFPFFSF</sequence>
<feature type="chain" id="PRO_0000354144" description="Photosystem I reaction center subunit IX">
    <location>
        <begin position="1"/>
        <end position="44"/>
    </location>
</feature>
<feature type="transmembrane region" description="Helical" evidence="1">
    <location>
        <begin position="7"/>
        <end position="27"/>
    </location>
</feature>
<name>PSAJ_CYCTA</name>
<organism>
    <name type="scientific">Cycas taitungensis</name>
    <name type="common">Prince sago</name>
    <name type="synonym">Cycas taiwaniana</name>
    <dbReference type="NCBI Taxonomy" id="54799"/>
    <lineage>
        <taxon>Eukaryota</taxon>
        <taxon>Viridiplantae</taxon>
        <taxon>Streptophyta</taxon>
        <taxon>Embryophyta</taxon>
        <taxon>Tracheophyta</taxon>
        <taxon>Spermatophyta</taxon>
        <taxon>Cycadidae</taxon>
        <taxon>Cycadales</taxon>
        <taxon>Cycadaceae</taxon>
        <taxon>Cycas</taxon>
    </lineage>
</organism>
<dbReference type="EMBL" id="AP009339">
    <property type="protein sequence ID" value="BAF64968.1"/>
    <property type="molecule type" value="Genomic_DNA"/>
</dbReference>
<dbReference type="RefSeq" id="YP_001312227.1">
    <property type="nucleotide sequence ID" value="NC_009618.1"/>
</dbReference>
<dbReference type="SMR" id="A6H5K2"/>
<dbReference type="GeneID" id="5309600"/>
<dbReference type="GO" id="GO:0009535">
    <property type="term" value="C:chloroplast thylakoid membrane"/>
    <property type="evidence" value="ECO:0007669"/>
    <property type="project" value="UniProtKB-SubCell"/>
</dbReference>
<dbReference type="GO" id="GO:0009522">
    <property type="term" value="C:photosystem I"/>
    <property type="evidence" value="ECO:0007669"/>
    <property type="project" value="UniProtKB-KW"/>
</dbReference>
<dbReference type="GO" id="GO:0015979">
    <property type="term" value="P:photosynthesis"/>
    <property type="evidence" value="ECO:0007669"/>
    <property type="project" value="UniProtKB-UniRule"/>
</dbReference>
<dbReference type="FunFam" id="1.20.5.510:FF:000001">
    <property type="entry name" value="Photosystem I reaction center subunit IX"/>
    <property type="match status" value="1"/>
</dbReference>
<dbReference type="Gene3D" id="1.20.5.510">
    <property type="entry name" value="Single helix bin"/>
    <property type="match status" value="1"/>
</dbReference>
<dbReference type="HAMAP" id="MF_00522">
    <property type="entry name" value="PSI_PsaJ"/>
    <property type="match status" value="1"/>
</dbReference>
<dbReference type="InterPro" id="IPR002615">
    <property type="entry name" value="PSI_PsaJ"/>
</dbReference>
<dbReference type="InterPro" id="IPR036062">
    <property type="entry name" value="PSI_PsaJ_sf"/>
</dbReference>
<dbReference type="PANTHER" id="PTHR36082">
    <property type="match status" value="1"/>
</dbReference>
<dbReference type="PANTHER" id="PTHR36082:SF2">
    <property type="entry name" value="PHOTOSYSTEM I REACTION CENTER SUBUNIT IX"/>
    <property type="match status" value="1"/>
</dbReference>
<dbReference type="Pfam" id="PF01701">
    <property type="entry name" value="PSI_PsaJ"/>
    <property type="match status" value="1"/>
</dbReference>
<dbReference type="SUPFAM" id="SSF81544">
    <property type="entry name" value="Subunit IX of photosystem I reaction centre, PsaJ"/>
    <property type="match status" value="1"/>
</dbReference>
<accession>A6H5K2</accession>